<protein>
    <recommendedName>
        <fullName>Uncharacterized protein Lin1265/Lin1734</fullName>
    </recommendedName>
</protein>
<accession>Q926B0</accession>
<organism>
    <name type="scientific">Listeria innocua serovar 6a (strain ATCC BAA-680 / CLIP 11262)</name>
    <dbReference type="NCBI Taxonomy" id="272626"/>
    <lineage>
        <taxon>Bacteria</taxon>
        <taxon>Bacillati</taxon>
        <taxon>Bacillota</taxon>
        <taxon>Bacilli</taxon>
        <taxon>Bacillales</taxon>
        <taxon>Listeriaceae</taxon>
        <taxon>Listeria</taxon>
    </lineage>
</organism>
<sequence length="74" mass="8534">MTLIFWTKNGQEMEFDLVENVEIDEKIITFDYYGEGEKRGVVFILNNLAGMAVEDENSESESKDGASWFKVYRG</sequence>
<dbReference type="EMBL" id="AL596168">
    <property type="protein sequence ID" value="CAC96496.1"/>
    <property type="molecule type" value="Genomic_DNA"/>
</dbReference>
<dbReference type="EMBL" id="AL596169">
    <property type="protein sequence ID" value="CAC96965.1"/>
    <property type="molecule type" value="Genomic_DNA"/>
</dbReference>
<dbReference type="PIR" id="AE1649">
    <property type="entry name" value="AE1649"/>
</dbReference>
<dbReference type="PIR" id="AH1590">
    <property type="entry name" value="AH1590"/>
</dbReference>
<dbReference type="STRING" id="272626.gene:17565596"/>
<dbReference type="KEGG" id="lin:lin1265"/>
<dbReference type="KEGG" id="lin:lin1734"/>
<dbReference type="HOGENOM" id="CLU_2683424_0_0_9"/>
<dbReference type="Proteomes" id="UP000002513">
    <property type="component" value="Chromosome"/>
</dbReference>
<reference key="1">
    <citation type="journal article" date="2001" name="Science">
        <title>Comparative genomics of Listeria species.</title>
        <authorList>
            <person name="Glaser P."/>
            <person name="Frangeul L."/>
            <person name="Buchrieser C."/>
            <person name="Rusniok C."/>
            <person name="Amend A."/>
            <person name="Baquero F."/>
            <person name="Berche P."/>
            <person name="Bloecker H."/>
            <person name="Brandt P."/>
            <person name="Chakraborty T."/>
            <person name="Charbit A."/>
            <person name="Chetouani F."/>
            <person name="Couve E."/>
            <person name="de Daruvar A."/>
            <person name="Dehoux P."/>
            <person name="Domann E."/>
            <person name="Dominguez-Bernal G."/>
            <person name="Duchaud E."/>
            <person name="Durant L."/>
            <person name="Dussurget O."/>
            <person name="Entian K.-D."/>
            <person name="Fsihi H."/>
            <person name="Garcia-del Portillo F."/>
            <person name="Garrido P."/>
            <person name="Gautier L."/>
            <person name="Goebel W."/>
            <person name="Gomez-Lopez N."/>
            <person name="Hain T."/>
            <person name="Hauf J."/>
            <person name="Jackson D."/>
            <person name="Jones L.-M."/>
            <person name="Kaerst U."/>
            <person name="Kreft J."/>
            <person name="Kuhn M."/>
            <person name="Kunst F."/>
            <person name="Kurapkat G."/>
            <person name="Madueno E."/>
            <person name="Maitournam A."/>
            <person name="Mata Vicente J."/>
            <person name="Ng E."/>
            <person name="Nedjari H."/>
            <person name="Nordsiek G."/>
            <person name="Novella S."/>
            <person name="de Pablos B."/>
            <person name="Perez-Diaz J.-C."/>
            <person name="Purcell R."/>
            <person name="Remmel B."/>
            <person name="Rose M."/>
            <person name="Schlueter T."/>
            <person name="Simoes N."/>
            <person name="Tierrez A."/>
            <person name="Vazquez-Boland J.-A."/>
            <person name="Voss H."/>
            <person name="Wehland J."/>
            <person name="Cossart P."/>
        </authorList>
    </citation>
    <scope>NUCLEOTIDE SEQUENCE [LARGE SCALE GENOMIC DNA]</scope>
    <source>
        <strain>ATCC BAA-680 / CLIP 11262</strain>
    </source>
</reference>
<gene>
    <name type="ordered locus">lin1265</name>
</gene>
<gene>
    <name type="ordered locus">lin1734</name>
</gene>
<name>Y1265_LISIN</name>
<feature type="chain" id="PRO_0000210814" description="Uncharacterized protein Lin1265/Lin1734">
    <location>
        <begin position="1"/>
        <end position="74"/>
    </location>
</feature>
<feature type="region of interest" description="Disordered" evidence="1">
    <location>
        <begin position="55"/>
        <end position="74"/>
    </location>
</feature>
<evidence type="ECO:0000256" key="1">
    <source>
        <dbReference type="SAM" id="MobiDB-lite"/>
    </source>
</evidence>
<proteinExistence type="predicted"/>